<comment type="function">
    <text evidence="1">Catalyzes the ATP-dependent phosphorylation of N-acetyl-L-glutamate.</text>
</comment>
<comment type="catalytic activity">
    <reaction evidence="1">
        <text>N-acetyl-L-glutamate + ATP = N-acetyl-L-glutamyl 5-phosphate + ADP</text>
        <dbReference type="Rhea" id="RHEA:14629"/>
        <dbReference type="ChEBI" id="CHEBI:30616"/>
        <dbReference type="ChEBI" id="CHEBI:44337"/>
        <dbReference type="ChEBI" id="CHEBI:57936"/>
        <dbReference type="ChEBI" id="CHEBI:456216"/>
        <dbReference type="EC" id="2.7.2.8"/>
    </reaction>
</comment>
<comment type="pathway">
    <text evidence="1">Amino-acid biosynthesis; L-arginine biosynthesis; N(2)-acetyl-L-ornithine from L-glutamate: step 2/4.</text>
</comment>
<comment type="subcellular location">
    <subcellularLocation>
        <location evidence="1">Cytoplasm</location>
    </subcellularLocation>
</comment>
<comment type="similarity">
    <text evidence="1">Belongs to the acetylglutamate kinase family. ArgB subfamily.</text>
</comment>
<accession>Q7WEW1</accession>
<name>ARGB_BORBR</name>
<gene>
    <name evidence="1" type="primary">argB</name>
    <name type="ordered locus">BB4520</name>
</gene>
<evidence type="ECO:0000255" key="1">
    <source>
        <dbReference type="HAMAP-Rule" id="MF_00082"/>
    </source>
</evidence>
<keyword id="KW-0028">Amino-acid biosynthesis</keyword>
<keyword id="KW-0055">Arginine biosynthesis</keyword>
<keyword id="KW-0067">ATP-binding</keyword>
<keyword id="KW-0963">Cytoplasm</keyword>
<keyword id="KW-0418">Kinase</keyword>
<keyword id="KW-0547">Nucleotide-binding</keyword>
<keyword id="KW-0808">Transferase</keyword>
<organism>
    <name type="scientific">Bordetella bronchiseptica (strain ATCC BAA-588 / NCTC 13252 / RB50)</name>
    <name type="common">Alcaligenes bronchisepticus</name>
    <dbReference type="NCBI Taxonomy" id="257310"/>
    <lineage>
        <taxon>Bacteria</taxon>
        <taxon>Pseudomonadati</taxon>
        <taxon>Pseudomonadota</taxon>
        <taxon>Betaproteobacteria</taxon>
        <taxon>Burkholderiales</taxon>
        <taxon>Alcaligenaceae</taxon>
        <taxon>Bordetella</taxon>
    </lineage>
</organism>
<protein>
    <recommendedName>
        <fullName evidence="1">Acetylglutamate kinase</fullName>
        <ecNumber evidence="1">2.7.2.8</ecNumber>
    </recommendedName>
    <alternativeName>
        <fullName evidence="1">N-acetyl-L-glutamate 5-phosphotransferase</fullName>
    </alternativeName>
    <alternativeName>
        <fullName evidence="1">NAG kinase</fullName>
        <shortName evidence="1">NAGK</shortName>
    </alternativeName>
</protein>
<proteinExistence type="inferred from homology"/>
<sequence>MTDTPDPAAVLSPAVKAAVLSEALPYIRRFHGKTIVVKYGGNAMTEERLQRSFAHDVVLLKLVGLNPVVVHGGGPQIDDALRRIGKQGTFVQGMRVTDAETMEVVEWVLGGQVQQDIVMMINEVGGKAVGLTGKDGMLIQATKKLMVNKDDPSQPLDIGFVGDITRVEPAVVKALQDDQFIPVISPIGYGEDGTAYNINADVVAGKMAEVLGAEKLLMMTNTPGVLDKGGKLLRSLSAQTIDELFADGTISGGMLPKISSSLDAAKNGVNSVHIVDGRVPHCLLLEILTDQGVGTMISSH</sequence>
<feature type="chain" id="PRO_0000112592" description="Acetylglutamate kinase">
    <location>
        <begin position="1"/>
        <end position="300"/>
    </location>
</feature>
<feature type="binding site" evidence="1">
    <location>
        <begin position="73"/>
        <end position="74"/>
    </location>
    <ligand>
        <name>substrate</name>
    </ligand>
</feature>
<feature type="binding site" evidence="1">
    <location>
        <position position="95"/>
    </location>
    <ligand>
        <name>substrate</name>
    </ligand>
</feature>
<feature type="binding site" evidence="1">
    <location>
        <position position="197"/>
    </location>
    <ligand>
        <name>substrate</name>
    </ligand>
</feature>
<feature type="site" description="Transition state stabilizer" evidence="1">
    <location>
        <position position="38"/>
    </location>
</feature>
<feature type="site" description="Transition state stabilizer" evidence="1">
    <location>
        <position position="257"/>
    </location>
</feature>
<dbReference type="EC" id="2.7.2.8" evidence="1"/>
<dbReference type="EMBL" id="BX640450">
    <property type="protein sequence ID" value="CAE34883.1"/>
    <property type="molecule type" value="Genomic_DNA"/>
</dbReference>
<dbReference type="RefSeq" id="WP_003815193.1">
    <property type="nucleotide sequence ID" value="NC_002927.3"/>
</dbReference>
<dbReference type="SMR" id="Q7WEW1"/>
<dbReference type="GeneID" id="56476981"/>
<dbReference type="KEGG" id="bbr:BB4520"/>
<dbReference type="eggNOG" id="COG0548">
    <property type="taxonomic scope" value="Bacteria"/>
</dbReference>
<dbReference type="HOGENOM" id="CLU_053680_0_0_4"/>
<dbReference type="UniPathway" id="UPA00068">
    <property type="reaction ID" value="UER00107"/>
</dbReference>
<dbReference type="Proteomes" id="UP000001027">
    <property type="component" value="Chromosome"/>
</dbReference>
<dbReference type="GO" id="GO:0005737">
    <property type="term" value="C:cytoplasm"/>
    <property type="evidence" value="ECO:0007669"/>
    <property type="project" value="UniProtKB-SubCell"/>
</dbReference>
<dbReference type="GO" id="GO:0003991">
    <property type="term" value="F:acetylglutamate kinase activity"/>
    <property type="evidence" value="ECO:0007669"/>
    <property type="project" value="UniProtKB-UniRule"/>
</dbReference>
<dbReference type="GO" id="GO:0005524">
    <property type="term" value="F:ATP binding"/>
    <property type="evidence" value="ECO:0007669"/>
    <property type="project" value="UniProtKB-UniRule"/>
</dbReference>
<dbReference type="GO" id="GO:0042450">
    <property type="term" value="P:arginine biosynthetic process via ornithine"/>
    <property type="evidence" value="ECO:0007669"/>
    <property type="project" value="UniProtKB-UniRule"/>
</dbReference>
<dbReference type="GO" id="GO:0006526">
    <property type="term" value="P:L-arginine biosynthetic process"/>
    <property type="evidence" value="ECO:0007669"/>
    <property type="project" value="UniProtKB-UniPathway"/>
</dbReference>
<dbReference type="CDD" id="cd04250">
    <property type="entry name" value="AAK_NAGK-C"/>
    <property type="match status" value="1"/>
</dbReference>
<dbReference type="FunFam" id="3.40.1160.10:FF:000004">
    <property type="entry name" value="Acetylglutamate kinase"/>
    <property type="match status" value="1"/>
</dbReference>
<dbReference type="Gene3D" id="3.40.1160.10">
    <property type="entry name" value="Acetylglutamate kinase-like"/>
    <property type="match status" value="1"/>
</dbReference>
<dbReference type="HAMAP" id="MF_00082">
    <property type="entry name" value="ArgB"/>
    <property type="match status" value="1"/>
</dbReference>
<dbReference type="InterPro" id="IPR036393">
    <property type="entry name" value="AceGlu_kinase-like_sf"/>
</dbReference>
<dbReference type="InterPro" id="IPR004662">
    <property type="entry name" value="AcgluKinase_fam"/>
</dbReference>
<dbReference type="InterPro" id="IPR037528">
    <property type="entry name" value="ArgB"/>
</dbReference>
<dbReference type="InterPro" id="IPR001048">
    <property type="entry name" value="Asp/Glu/Uridylate_kinase"/>
</dbReference>
<dbReference type="InterPro" id="IPR001057">
    <property type="entry name" value="Glu/AcGlu_kinase"/>
</dbReference>
<dbReference type="InterPro" id="IPR041727">
    <property type="entry name" value="NAGK-C"/>
</dbReference>
<dbReference type="NCBIfam" id="TIGR00761">
    <property type="entry name" value="argB"/>
    <property type="match status" value="1"/>
</dbReference>
<dbReference type="PANTHER" id="PTHR23342">
    <property type="entry name" value="N-ACETYLGLUTAMATE SYNTHASE"/>
    <property type="match status" value="1"/>
</dbReference>
<dbReference type="PANTHER" id="PTHR23342:SF0">
    <property type="entry name" value="N-ACETYLGLUTAMATE SYNTHASE, MITOCHONDRIAL"/>
    <property type="match status" value="1"/>
</dbReference>
<dbReference type="Pfam" id="PF00696">
    <property type="entry name" value="AA_kinase"/>
    <property type="match status" value="1"/>
</dbReference>
<dbReference type="PIRSF" id="PIRSF000728">
    <property type="entry name" value="NAGK"/>
    <property type="match status" value="1"/>
</dbReference>
<dbReference type="PRINTS" id="PR00474">
    <property type="entry name" value="GLU5KINASE"/>
</dbReference>
<dbReference type="SUPFAM" id="SSF53633">
    <property type="entry name" value="Carbamate kinase-like"/>
    <property type="match status" value="1"/>
</dbReference>
<reference key="1">
    <citation type="journal article" date="2003" name="Nat. Genet.">
        <title>Comparative analysis of the genome sequences of Bordetella pertussis, Bordetella parapertussis and Bordetella bronchiseptica.</title>
        <authorList>
            <person name="Parkhill J."/>
            <person name="Sebaihia M."/>
            <person name="Preston A."/>
            <person name="Murphy L.D."/>
            <person name="Thomson N.R."/>
            <person name="Harris D.E."/>
            <person name="Holden M.T.G."/>
            <person name="Churcher C.M."/>
            <person name="Bentley S.D."/>
            <person name="Mungall K.L."/>
            <person name="Cerdeno-Tarraga A.-M."/>
            <person name="Temple L."/>
            <person name="James K.D."/>
            <person name="Harris B."/>
            <person name="Quail M.A."/>
            <person name="Achtman M."/>
            <person name="Atkin R."/>
            <person name="Baker S."/>
            <person name="Basham D."/>
            <person name="Bason N."/>
            <person name="Cherevach I."/>
            <person name="Chillingworth T."/>
            <person name="Collins M."/>
            <person name="Cronin A."/>
            <person name="Davis P."/>
            <person name="Doggett J."/>
            <person name="Feltwell T."/>
            <person name="Goble A."/>
            <person name="Hamlin N."/>
            <person name="Hauser H."/>
            <person name="Holroyd S."/>
            <person name="Jagels K."/>
            <person name="Leather S."/>
            <person name="Moule S."/>
            <person name="Norberczak H."/>
            <person name="O'Neil S."/>
            <person name="Ormond D."/>
            <person name="Price C."/>
            <person name="Rabbinowitsch E."/>
            <person name="Rutter S."/>
            <person name="Sanders M."/>
            <person name="Saunders D."/>
            <person name="Seeger K."/>
            <person name="Sharp S."/>
            <person name="Simmonds M."/>
            <person name="Skelton J."/>
            <person name="Squares R."/>
            <person name="Squares S."/>
            <person name="Stevens K."/>
            <person name="Unwin L."/>
            <person name="Whitehead S."/>
            <person name="Barrell B.G."/>
            <person name="Maskell D.J."/>
        </authorList>
    </citation>
    <scope>NUCLEOTIDE SEQUENCE [LARGE SCALE GENOMIC DNA]</scope>
    <source>
        <strain>ATCC BAA-588 / NCTC 13252 / RB50</strain>
    </source>
</reference>